<name>STAD_SPIOL</name>
<protein>
    <recommendedName>
        <fullName>Stearoyl-[acyl-carrier-protein] 9-desaturase, chloroplastic</fullName>
        <shortName>Stearoyl-ACP desaturase</shortName>
        <ecNumber evidence="1">1.14.19.2</ecNumber>
    </recommendedName>
    <alternativeName>
        <fullName>Acyl-[acyl-carrier-protein] desaturase</fullName>
    </alternativeName>
</protein>
<reference key="1">
    <citation type="journal article" date="1992" name="Plant Mol. Biol.">
        <title>Nucleotide sequence of a cDNA clone encoding a precursor to stearoyl-(acyl-carrier-protein) desaturase from spinach, Spinacia oleracea.</title>
        <authorList>
            <person name="Beppu T."/>
            <person name="Nishida I."/>
            <person name="Matsuo T."/>
            <person name="Murata N."/>
        </authorList>
    </citation>
    <scope>NUCLEOTIDE SEQUENCE [MRNA]</scope>
    <source>
        <strain>cv. Biroflea</strain>
        <tissue>Cotyledon</tissue>
    </source>
</reference>
<proteinExistence type="evidence at transcript level"/>
<accession>P28645</accession>
<comment type="function">
    <text evidence="1">Converts stearoyl-ACP to oleoyl-ACP by introduction of a cis double bond between carbons 9 and 10 of the acyl chain.</text>
</comment>
<comment type="catalytic activity">
    <reaction evidence="1">
        <text>octadecanoyl-[ACP] + 2 reduced [2Fe-2S]-[ferredoxin] + O2 + 2 H(+) = (9Z)-octadecenoyl-[ACP] + 2 oxidized [2Fe-2S]-[ferredoxin] + 2 H2O</text>
        <dbReference type="Rhea" id="RHEA:11776"/>
        <dbReference type="Rhea" id="RHEA-COMP:9656"/>
        <dbReference type="Rhea" id="RHEA-COMP:9924"/>
        <dbReference type="Rhea" id="RHEA-COMP:10000"/>
        <dbReference type="Rhea" id="RHEA-COMP:10001"/>
        <dbReference type="ChEBI" id="CHEBI:15377"/>
        <dbReference type="ChEBI" id="CHEBI:15378"/>
        <dbReference type="ChEBI" id="CHEBI:15379"/>
        <dbReference type="ChEBI" id="CHEBI:33737"/>
        <dbReference type="ChEBI" id="CHEBI:33738"/>
        <dbReference type="ChEBI" id="CHEBI:78495"/>
        <dbReference type="ChEBI" id="CHEBI:78783"/>
        <dbReference type="EC" id="1.14.19.2"/>
    </reaction>
</comment>
<comment type="cofactor">
    <cofactor evidence="1">
        <name>Fe(2+)</name>
        <dbReference type="ChEBI" id="CHEBI:29033"/>
    </cofactor>
    <text evidence="1">Binds 2 Fe(2+) ions per subunit.</text>
</comment>
<comment type="pathway">
    <text>Lipid metabolism; fatty acid metabolism.</text>
</comment>
<comment type="subunit">
    <text>Homodimer.</text>
</comment>
<comment type="subcellular location">
    <subcellularLocation>
        <location>Plastid</location>
        <location>Chloroplast</location>
    </subcellularLocation>
    <subcellularLocation>
        <location>Plastid</location>
    </subcellularLocation>
    <text>In green tissue, found in chloroplasts. In non-photosynthetic tissue, found in plastids.</text>
</comment>
<comment type="similarity">
    <text evidence="3">Belongs to the fatty acid desaturase type 2 family.</text>
</comment>
<dbReference type="EC" id="1.14.19.2" evidence="1"/>
<dbReference type="EMBL" id="X62898">
    <property type="protein sequence ID" value="CAA44687.1"/>
    <property type="molecule type" value="mRNA"/>
</dbReference>
<dbReference type="PIR" id="S22480">
    <property type="entry name" value="OHSPAD"/>
</dbReference>
<dbReference type="RefSeq" id="NP_001413291.1">
    <property type="nucleotide sequence ID" value="NM_001426362.1"/>
</dbReference>
<dbReference type="SMR" id="P28645"/>
<dbReference type="GeneID" id="110785399"/>
<dbReference type="OrthoDB" id="1924153at2759"/>
<dbReference type="UniPathway" id="UPA00199"/>
<dbReference type="Proteomes" id="UP001155700">
    <property type="component" value="Unplaced"/>
</dbReference>
<dbReference type="GO" id="GO:0009570">
    <property type="term" value="C:chloroplast stroma"/>
    <property type="evidence" value="ECO:0007669"/>
    <property type="project" value="TreeGrafter"/>
</dbReference>
<dbReference type="GO" id="GO:0046872">
    <property type="term" value="F:metal ion binding"/>
    <property type="evidence" value="ECO:0007669"/>
    <property type="project" value="UniProtKB-KW"/>
</dbReference>
<dbReference type="GO" id="GO:0045300">
    <property type="term" value="F:stearoyl-[ACP] desaturase activity"/>
    <property type="evidence" value="ECO:0000318"/>
    <property type="project" value="GO_Central"/>
</dbReference>
<dbReference type="GO" id="GO:0006633">
    <property type="term" value="P:fatty acid biosynthetic process"/>
    <property type="evidence" value="ECO:0007669"/>
    <property type="project" value="UniProtKB-KW"/>
</dbReference>
<dbReference type="GO" id="GO:0006631">
    <property type="term" value="P:fatty acid metabolic process"/>
    <property type="evidence" value="ECO:0000318"/>
    <property type="project" value="GO_Central"/>
</dbReference>
<dbReference type="CDD" id="cd01050">
    <property type="entry name" value="Acyl_ACP_Desat"/>
    <property type="match status" value="1"/>
</dbReference>
<dbReference type="FunFam" id="1.10.620.20:FF:000002">
    <property type="entry name" value="Stearoyl-[acyl-carrier-protein] 9-desaturase, chloroplastic"/>
    <property type="match status" value="1"/>
</dbReference>
<dbReference type="Gene3D" id="1.10.620.20">
    <property type="entry name" value="Ribonucleotide Reductase, subunit A"/>
    <property type="match status" value="1"/>
</dbReference>
<dbReference type="InterPro" id="IPR005803">
    <property type="entry name" value="FADS-2_CS"/>
</dbReference>
<dbReference type="InterPro" id="IPR005067">
    <property type="entry name" value="Fatty_acid_desaturase-2"/>
</dbReference>
<dbReference type="InterPro" id="IPR009078">
    <property type="entry name" value="Ferritin-like_SF"/>
</dbReference>
<dbReference type="InterPro" id="IPR012348">
    <property type="entry name" value="RNR-like"/>
</dbReference>
<dbReference type="PANTHER" id="PTHR31155">
    <property type="entry name" value="ACYL- ACYL-CARRIER-PROTEIN DESATURASE-RELATED"/>
    <property type="match status" value="1"/>
</dbReference>
<dbReference type="PANTHER" id="PTHR31155:SF9">
    <property type="entry name" value="STEAROYL-[ACYL-CARRIER-PROTEIN] 9-DESATURASE 7, CHLOROPLASTIC"/>
    <property type="match status" value="1"/>
</dbReference>
<dbReference type="Pfam" id="PF03405">
    <property type="entry name" value="FA_desaturase_2"/>
    <property type="match status" value="1"/>
</dbReference>
<dbReference type="PIRSF" id="PIRSF000346">
    <property type="entry name" value="Dlt9_acylACP_des"/>
    <property type="match status" value="1"/>
</dbReference>
<dbReference type="SUPFAM" id="SSF47240">
    <property type="entry name" value="Ferritin-like"/>
    <property type="match status" value="1"/>
</dbReference>
<dbReference type="PROSITE" id="PS00574">
    <property type="entry name" value="FATTY_ACID_DESATUR_2"/>
    <property type="match status" value="1"/>
</dbReference>
<sequence length="399" mass="45663">MALNLNPVSTPFQCRRLPSFSPRQTPSRRSPKFFMASTLSSSSPKEAESLKKPFSPPREVHVQVTHSMPQEKIEIFKSLEGWAEENLLVHLKPVEKCWQPQDYLPDPASEDFRDQVKEIQERAKEIPDDLYVVLVGDMITEEALPTYQTMLNTLDGAKDETGASPTSWAVWTRAWTAEENRHGDLLNKYLYLSGRVDMRSIEKTIQYLIGSGMDPRTENNPYLGFVYTSFQERATFVSHGNSARLAKEHGDLKMAQICGIIASDEKRHETAYTKIVEKLFEIDPDATVLAFADMMKKKISMPAHLMYDGRDDNLFDHFSAVAQRLGVYTAKDYADILEFLVGRWEVEKLTGLSSEGQKAQDYVCSLPPRIRRLEERARERAKQAPSMPFSWIFDRQVKL</sequence>
<feature type="transit peptide" description="Chloroplast">
    <location>
        <begin position="1"/>
        <end position="35"/>
    </location>
</feature>
<feature type="chain" id="PRO_0000007142" description="Stearoyl-[acyl-carrier-protein] 9-desaturase, chloroplastic">
    <location>
        <begin position="36"/>
        <end position="399"/>
    </location>
</feature>
<feature type="region of interest" description="Disordered" evidence="2">
    <location>
        <begin position="1"/>
        <end position="57"/>
    </location>
</feature>
<feature type="compositionally biased region" description="Polar residues" evidence="2">
    <location>
        <begin position="1"/>
        <end position="12"/>
    </location>
</feature>
<feature type="binding site" evidence="1">
    <location>
        <position position="141"/>
    </location>
    <ligand>
        <name>Fe cation</name>
        <dbReference type="ChEBI" id="CHEBI:24875"/>
        <label>1</label>
    </ligand>
</feature>
<feature type="binding site" evidence="1">
    <location>
        <position position="179"/>
    </location>
    <ligand>
        <name>Fe cation</name>
        <dbReference type="ChEBI" id="CHEBI:24875"/>
        <label>1</label>
    </ligand>
</feature>
<feature type="binding site" evidence="1">
    <location>
        <position position="179"/>
    </location>
    <ligand>
        <name>Fe cation</name>
        <dbReference type="ChEBI" id="CHEBI:24875"/>
        <label>2</label>
    </ligand>
</feature>
<feature type="binding site" evidence="1">
    <location>
        <position position="182"/>
    </location>
    <ligand>
        <name>Fe cation</name>
        <dbReference type="ChEBI" id="CHEBI:24875"/>
        <label>1</label>
    </ligand>
</feature>
<feature type="binding site" evidence="1">
    <location>
        <position position="232"/>
    </location>
    <ligand>
        <name>Fe cation</name>
        <dbReference type="ChEBI" id="CHEBI:24875"/>
        <label>2</label>
    </ligand>
</feature>
<feature type="binding site" evidence="1">
    <location>
        <position position="265"/>
    </location>
    <ligand>
        <name>Fe cation</name>
        <dbReference type="ChEBI" id="CHEBI:24875"/>
        <label>1</label>
    </ligand>
</feature>
<feature type="binding site" evidence="1">
    <location>
        <position position="265"/>
    </location>
    <ligand>
        <name>Fe cation</name>
        <dbReference type="ChEBI" id="CHEBI:24875"/>
        <label>2</label>
    </ligand>
</feature>
<feature type="binding site" evidence="1">
    <location>
        <position position="268"/>
    </location>
    <ligand>
        <name>Fe cation</name>
        <dbReference type="ChEBI" id="CHEBI:24875"/>
        <label>2</label>
    </ligand>
</feature>
<keyword id="KW-0150">Chloroplast</keyword>
<keyword id="KW-0275">Fatty acid biosynthesis</keyword>
<keyword id="KW-0276">Fatty acid metabolism</keyword>
<keyword id="KW-0408">Iron</keyword>
<keyword id="KW-0444">Lipid biosynthesis</keyword>
<keyword id="KW-0443">Lipid metabolism</keyword>
<keyword id="KW-0479">Metal-binding</keyword>
<keyword id="KW-0560">Oxidoreductase</keyword>
<keyword id="KW-0934">Plastid</keyword>
<keyword id="KW-1185">Reference proteome</keyword>
<keyword id="KW-0809">Transit peptide</keyword>
<evidence type="ECO:0000250" key="1">
    <source>
        <dbReference type="UniProtKB" id="P22337"/>
    </source>
</evidence>
<evidence type="ECO:0000256" key="2">
    <source>
        <dbReference type="SAM" id="MobiDB-lite"/>
    </source>
</evidence>
<evidence type="ECO:0000305" key="3"/>
<organism>
    <name type="scientific">Spinacia oleracea</name>
    <name type="common">Spinach</name>
    <dbReference type="NCBI Taxonomy" id="3562"/>
    <lineage>
        <taxon>Eukaryota</taxon>
        <taxon>Viridiplantae</taxon>
        <taxon>Streptophyta</taxon>
        <taxon>Embryophyta</taxon>
        <taxon>Tracheophyta</taxon>
        <taxon>Spermatophyta</taxon>
        <taxon>Magnoliopsida</taxon>
        <taxon>eudicotyledons</taxon>
        <taxon>Gunneridae</taxon>
        <taxon>Pentapetalae</taxon>
        <taxon>Caryophyllales</taxon>
        <taxon>Chenopodiaceae</taxon>
        <taxon>Chenopodioideae</taxon>
        <taxon>Anserineae</taxon>
        <taxon>Spinacia</taxon>
    </lineage>
</organism>